<protein>
    <recommendedName>
        <fullName>Tryptophan 5-hydroxylase 2</fullName>
        <ecNumber evidence="4">1.14.16.4</ecNumber>
    </recommendedName>
    <alternativeName>
        <fullName>Tryptophan 5-monooxygenase 2</fullName>
    </alternativeName>
</protein>
<keyword id="KW-0408">Iron</keyword>
<keyword id="KW-0479">Metal-binding</keyword>
<keyword id="KW-0503">Monooxygenase</keyword>
<keyword id="KW-0560">Oxidoreductase</keyword>
<keyword id="KW-0597">Phosphoprotein</keyword>
<keyword id="KW-1185">Reference proteome</keyword>
<keyword id="KW-0724">Serotonin biosynthesis</keyword>
<feature type="chain" id="PRO_0000252111" description="Tryptophan 5-hydroxylase 2">
    <location>
        <begin position="1"/>
        <end position="490"/>
    </location>
</feature>
<feature type="domain" description="ACT" evidence="5">
    <location>
        <begin position="65"/>
        <end position="140"/>
    </location>
</feature>
<feature type="region of interest" description="Disordered" evidence="6">
    <location>
        <begin position="34"/>
        <end position="62"/>
    </location>
</feature>
<feature type="compositionally biased region" description="Polar residues" evidence="6">
    <location>
        <begin position="50"/>
        <end position="62"/>
    </location>
</feature>
<feature type="binding site" evidence="1">
    <location>
        <position position="318"/>
    </location>
    <ligand>
        <name>Fe cation</name>
        <dbReference type="ChEBI" id="CHEBI:24875"/>
    </ligand>
</feature>
<feature type="binding site" evidence="1">
    <location>
        <position position="323"/>
    </location>
    <ligand>
        <name>Fe cation</name>
        <dbReference type="ChEBI" id="CHEBI:24875"/>
    </ligand>
</feature>
<feature type="binding site" evidence="1">
    <location>
        <position position="363"/>
    </location>
    <ligand>
        <name>Fe cation</name>
        <dbReference type="ChEBI" id="CHEBI:24875"/>
    </ligand>
</feature>
<feature type="modified residue" description="Phosphoserine" evidence="2">
    <location>
        <position position="19"/>
    </location>
</feature>
<dbReference type="EC" id="1.14.16.4" evidence="4"/>
<dbReference type="EMBL" id="DQ360113">
    <property type="protein sequence ID" value="ABC94730.1"/>
    <property type="molecule type" value="mRNA"/>
</dbReference>
<dbReference type="RefSeq" id="NP_001035035.1">
    <property type="nucleotide sequence ID" value="NM_001039946.1"/>
</dbReference>
<dbReference type="SMR" id="Q2HZ26"/>
<dbReference type="FunCoup" id="Q2HZ26">
    <property type="interactions" value="307"/>
</dbReference>
<dbReference type="STRING" id="9544.ENSMMUP00000010151"/>
<dbReference type="PaxDb" id="9544-ENSMMUP00000010151"/>
<dbReference type="Ensembl" id="ENSMMUT00000010821.3">
    <property type="protein sequence ID" value="ENSMMUP00000010151.3"/>
    <property type="gene ID" value="ENSMMUG00000007730.4"/>
</dbReference>
<dbReference type="GeneID" id="664730"/>
<dbReference type="KEGG" id="mcc:664730"/>
<dbReference type="CTD" id="121278"/>
<dbReference type="VEuPathDB" id="HostDB:ENSMMUG00000007730"/>
<dbReference type="VGNC" id="VGNC:79270">
    <property type="gene designation" value="TPH2"/>
</dbReference>
<dbReference type="eggNOG" id="KOG3820">
    <property type="taxonomic scope" value="Eukaryota"/>
</dbReference>
<dbReference type="GeneTree" id="ENSGT00950000182885"/>
<dbReference type="InParanoid" id="Q2HZ26"/>
<dbReference type="OMA" id="VHFNPYT"/>
<dbReference type="OrthoDB" id="983542at2759"/>
<dbReference type="BRENDA" id="1.14.16.4">
    <property type="organism ID" value="3126"/>
</dbReference>
<dbReference type="UniPathway" id="UPA00846">
    <property type="reaction ID" value="UER00799"/>
</dbReference>
<dbReference type="Proteomes" id="UP000006718">
    <property type="component" value="Chromosome 11"/>
</dbReference>
<dbReference type="Bgee" id="ENSMMUG00000007730">
    <property type="expression patterns" value="Expressed in cerebellum and 1 other cell type or tissue"/>
</dbReference>
<dbReference type="GO" id="GO:0043005">
    <property type="term" value="C:neuron projection"/>
    <property type="evidence" value="ECO:0000318"/>
    <property type="project" value="GO_Central"/>
</dbReference>
<dbReference type="GO" id="GO:0005506">
    <property type="term" value="F:iron ion binding"/>
    <property type="evidence" value="ECO:0007669"/>
    <property type="project" value="InterPro"/>
</dbReference>
<dbReference type="GO" id="GO:0004510">
    <property type="term" value="F:tryptophan 5-monooxygenase activity"/>
    <property type="evidence" value="ECO:0000250"/>
    <property type="project" value="UniProtKB"/>
</dbReference>
<dbReference type="GO" id="GO:0009072">
    <property type="term" value="P:aromatic amino acid metabolic process"/>
    <property type="evidence" value="ECO:0007669"/>
    <property type="project" value="InterPro"/>
</dbReference>
<dbReference type="GO" id="GO:0042427">
    <property type="term" value="P:serotonin biosynthetic process"/>
    <property type="evidence" value="ECO:0007669"/>
    <property type="project" value="UniProtKB-UniPathway"/>
</dbReference>
<dbReference type="CDD" id="cd03346">
    <property type="entry name" value="eu_TrpOH"/>
    <property type="match status" value="1"/>
</dbReference>
<dbReference type="FunFam" id="1.10.800.10:FF:000001">
    <property type="entry name" value="tryptophan 5-hydroxylase 1"/>
    <property type="match status" value="1"/>
</dbReference>
<dbReference type="Gene3D" id="1.10.800.10">
    <property type="entry name" value="Aromatic amino acid hydroxylase"/>
    <property type="match status" value="1"/>
</dbReference>
<dbReference type="InterPro" id="IPR045865">
    <property type="entry name" value="ACT-like_dom_sf"/>
</dbReference>
<dbReference type="InterPro" id="IPR002912">
    <property type="entry name" value="ACT_dom"/>
</dbReference>
<dbReference type="InterPro" id="IPR001273">
    <property type="entry name" value="ArAA_hydroxylase"/>
</dbReference>
<dbReference type="InterPro" id="IPR018301">
    <property type="entry name" value="ArAA_hydroxylase_Fe/CU_BS"/>
</dbReference>
<dbReference type="InterPro" id="IPR036951">
    <property type="entry name" value="ArAA_hydroxylase_sf"/>
</dbReference>
<dbReference type="InterPro" id="IPR036329">
    <property type="entry name" value="Aro-AA_hydroxylase_C_sf"/>
</dbReference>
<dbReference type="InterPro" id="IPR019774">
    <property type="entry name" value="Aromatic-AA_hydroxylase_C"/>
</dbReference>
<dbReference type="InterPro" id="IPR005963">
    <property type="entry name" value="Trp_5_mOase"/>
</dbReference>
<dbReference type="InterPro" id="IPR041904">
    <property type="entry name" value="TrpOH_cat"/>
</dbReference>
<dbReference type="InterPro" id="IPR019773">
    <property type="entry name" value="Tyrosine_3-monooxygenase-like"/>
</dbReference>
<dbReference type="NCBIfam" id="TIGR01270">
    <property type="entry name" value="Trp_5_monoox"/>
    <property type="match status" value="1"/>
</dbReference>
<dbReference type="PANTHER" id="PTHR11473">
    <property type="entry name" value="AROMATIC AMINO ACID HYDROXYLASE"/>
    <property type="match status" value="1"/>
</dbReference>
<dbReference type="PANTHER" id="PTHR11473:SF16">
    <property type="entry name" value="TRYPTOPHAN 5-HYDROXYLASE 2"/>
    <property type="match status" value="1"/>
</dbReference>
<dbReference type="Pfam" id="PF00351">
    <property type="entry name" value="Biopterin_H"/>
    <property type="match status" value="1"/>
</dbReference>
<dbReference type="PIRSF" id="PIRSF000336">
    <property type="entry name" value="TH"/>
    <property type="match status" value="1"/>
</dbReference>
<dbReference type="PRINTS" id="PR00372">
    <property type="entry name" value="FYWHYDRXLASE"/>
</dbReference>
<dbReference type="SUPFAM" id="SSF55021">
    <property type="entry name" value="ACT-like"/>
    <property type="match status" value="1"/>
</dbReference>
<dbReference type="SUPFAM" id="SSF56534">
    <property type="entry name" value="Aromatic aminoacid monoxygenases, catalytic and oligomerization domains"/>
    <property type="match status" value="1"/>
</dbReference>
<dbReference type="PROSITE" id="PS51671">
    <property type="entry name" value="ACT"/>
    <property type="match status" value="1"/>
</dbReference>
<dbReference type="PROSITE" id="PS00367">
    <property type="entry name" value="BH4_AAA_HYDROXYL_1"/>
    <property type="match status" value="1"/>
</dbReference>
<dbReference type="PROSITE" id="PS51410">
    <property type="entry name" value="BH4_AAA_HYDROXYL_2"/>
    <property type="match status" value="1"/>
</dbReference>
<organism>
    <name type="scientific">Macaca mulatta</name>
    <name type="common">Rhesus macaque</name>
    <dbReference type="NCBI Taxonomy" id="9544"/>
    <lineage>
        <taxon>Eukaryota</taxon>
        <taxon>Metazoa</taxon>
        <taxon>Chordata</taxon>
        <taxon>Craniata</taxon>
        <taxon>Vertebrata</taxon>
        <taxon>Euteleostomi</taxon>
        <taxon>Mammalia</taxon>
        <taxon>Eutheria</taxon>
        <taxon>Euarchontoglires</taxon>
        <taxon>Primates</taxon>
        <taxon>Haplorrhini</taxon>
        <taxon>Catarrhini</taxon>
        <taxon>Cercopithecidae</taxon>
        <taxon>Cercopithecinae</taxon>
        <taxon>Macaca</taxon>
    </lineage>
</organism>
<sequence length="490" mass="56095">MQPAMMMFSSKYWARRGFSLDSAVPEEHQLLGNLTLNKANSGKNDDKGNKGSSKNETATESGKTAVVFSLKNEVGGLVKALRLFQEKRVHMVHIESRKSRRRSSEVEIFVDCECGKTEFNELIQLLKFQTTIVTLNPPENIWTEEEELEDVPWFPRKISELDKCSHRVLMYGSELDADHPGFKDNVYRQRRKYFVDVAMGYKYGQPIPRVEYTEEETKTWGVVFRELSKLYPTHACREYLKNFPLLTKYCGYREDNVPQLEDVSMFLKERSGFTVRPVAGYLSPRDFLAGLAYRVFHCTQYIRHGSDPLYTPEPDTCHELLGHVPLLADPKFAQFSQEIGLASLGASDEDVQKLATCYFFTIEFGLCKQEGQLRAYGAGLLSSIGELKHALSDKACVKAFDPKTTCLQECLITTFQEAYFVSESFEEAKEKMRDFAKSITRPFSVYFNPYTQSIEILKDTRSIENVVQDLRSDLNTVCDALNKMNQYLGI</sequence>
<proteinExistence type="evidence at transcript level"/>
<accession>Q2HZ26</accession>
<evidence type="ECO:0000250" key="1"/>
<evidence type="ECO:0000250" key="2">
    <source>
        <dbReference type="UniProtKB" id="Q8CGU9"/>
    </source>
</evidence>
<evidence type="ECO:0000250" key="3">
    <source>
        <dbReference type="UniProtKB" id="Q8CGV2"/>
    </source>
</evidence>
<evidence type="ECO:0000250" key="4">
    <source>
        <dbReference type="UniProtKB" id="Q8IWU9"/>
    </source>
</evidence>
<evidence type="ECO:0000255" key="5">
    <source>
        <dbReference type="PROSITE-ProRule" id="PRU01007"/>
    </source>
</evidence>
<evidence type="ECO:0000256" key="6">
    <source>
        <dbReference type="SAM" id="MobiDB-lite"/>
    </source>
</evidence>
<evidence type="ECO:0000305" key="7"/>
<reference key="1">
    <citation type="submission" date="2006-01" db="EMBL/GenBank/DDBJ databases">
        <authorList>
            <person name="Chen G.-L."/>
            <person name="Miller G.M."/>
        </authorList>
    </citation>
    <scope>NUCLEOTIDE SEQUENCE [MRNA]</scope>
</reference>
<name>TPH2_MACMU</name>
<gene>
    <name type="primary">TPH2</name>
</gene>
<comment type="catalytic activity">
    <reaction evidence="4">
        <text>(6R)-L-erythro-5,6,7,8-tetrahydrobiopterin + L-tryptophan + O2 = 5-hydroxy-L-tryptophan + (4aS,6R)-4a-hydroxy-L-erythro-5,6,7,8-tetrahydrobiopterin</text>
        <dbReference type="Rhea" id="RHEA:16709"/>
        <dbReference type="ChEBI" id="CHEBI:15379"/>
        <dbReference type="ChEBI" id="CHEBI:15642"/>
        <dbReference type="ChEBI" id="CHEBI:57912"/>
        <dbReference type="ChEBI" id="CHEBI:58266"/>
        <dbReference type="ChEBI" id="CHEBI:59560"/>
        <dbReference type="EC" id="1.14.16.4"/>
    </reaction>
</comment>
<comment type="cofactor">
    <cofactor evidence="1">
        <name>Fe(2+)</name>
        <dbReference type="ChEBI" id="CHEBI:29033"/>
    </cofactor>
</comment>
<comment type="pathway">
    <text>Aromatic compound metabolism; serotonin biosynthesis; serotonin from L-tryptophan: step 1/2.</text>
</comment>
<comment type="subunit">
    <text evidence="3">Interacts with DNAJC12.</text>
</comment>
<comment type="similarity">
    <text evidence="7">Belongs to the biopterin-dependent aromatic amino acid hydroxylase family.</text>
</comment>